<accession>B5YR06</accession>
<reference key="1">
    <citation type="journal article" date="2011" name="Proc. Natl. Acad. Sci. U.S.A.">
        <title>Genomic anatomy of Escherichia coli O157:H7 outbreaks.</title>
        <authorList>
            <person name="Eppinger M."/>
            <person name="Mammel M.K."/>
            <person name="Leclerc J.E."/>
            <person name="Ravel J."/>
            <person name="Cebula T.A."/>
        </authorList>
    </citation>
    <scope>NUCLEOTIDE SEQUENCE [LARGE SCALE GENOMIC DNA]</scope>
    <source>
        <strain>EC4115 / EHEC</strain>
    </source>
</reference>
<protein>
    <recommendedName>
        <fullName evidence="1">Holliday junction branch migration complex subunit RuvA</fullName>
    </recommendedName>
</protein>
<proteinExistence type="inferred from homology"/>
<dbReference type="EMBL" id="CP001164">
    <property type="protein sequence ID" value="ACI35061.1"/>
    <property type="molecule type" value="Genomic_DNA"/>
</dbReference>
<dbReference type="RefSeq" id="WP_000580323.1">
    <property type="nucleotide sequence ID" value="NC_011353.1"/>
</dbReference>
<dbReference type="SMR" id="B5YR06"/>
<dbReference type="GeneID" id="75057740"/>
<dbReference type="KEGG" id="ecf:ECH74115_2597"/>
<dbReference type="HOGENOM" id="CLU_087936_0_0_6"/>
<dbReference type="GO" id="GO:0005737">
    <property type="term" value="C:cytoplasm"/>
    <property type="evidence" value="ECO:0007669"/>
    <property type="project" value="UniProtKB-SubCell"/>
</dbReference>
<dbReference type="GO" id="GO:0009379">
    <property type="term" value="C:Holliday junction helicase complex"/>
    <property type="evidence" value="ECO:0007669"/>
    <property type="project" value="InterPro"/>
</dbReference>
<dbReference type="GO" id="GO:0048476">
    <property type="term" value="C:Holliday junction resolvase complex"/>
    <property type="evidence" value="ECO:0007669"/>
    <property type="project" value="UniProtKB-UniRule"/>
</dbReference>
<dbReference type="GO" id="GO:0005524">
    <property type="term" value="F:ATP binding"/>
    <property type="evidence" value="ECO:0007669"/>
    <property type="project" value="InterPro"/>
</dbReference>
<dbReference type="GO" id="GO:0000400">
    <property type="term" value="F:four-way junction DNA binding"/>
    <property type="evidence" value="ECO:0007669"/>
    <property type="project" value="UniProtKB-UniRule"/>
</dbReference>
<dbReference type="GO" id="GO:0009378">
    <property type="term" value="F:four-way junction helicase activity"/>
    <property type="evidence" value="ECO:0007669"/>
    <property type="project" value="InterPro"/>
</dbReference>
<dbReference type="GO" id="GO:0006310">
    <property type="term" value="P:DNA recombination"/>
    <property type="evidence" value="ECO:0007669"/>
    <property type="project" value="UniProtKB-UniRule"/>
</dbReference>
<dbReference type="GO" id="GO:0006281">
    <property type="term" value="P:DNA repair"/>
    <property type="evidence" value="ECO:0007669"/>
    <property type="project" value="UniProtKB-UniRule"/>
</dbReference>
<dbReference type="GO" id="GO:0009432">
    <property type="term" value="P:SOS response"/>
    <property type="evidence" value="ECO:0007669"/>
    <property type="project" value="UniProtKB-UniRule"/>
</dbReference>
<dbReference type="CDD" id="cd14332">
    <property type="entry name" value="UBA_RuvA_C"/>
    <property type="match status" value="1"/>
</dbReference>
<dbReference type="FunFam" id="1.10.150.20:FF:000012">
    <property type="entry name" value="Holliday junction ATP-dependent DNA helicase RuvA"/>
    <property type="match status" value="1"/>
</dbReference>
<dbReference type="FunFam" id="1.10.8.10:FF:000008">
    <property type="entry name" value="Holliday junction ATP-dependent DNA helicase RuvA"/>
    <property type="match status" value="1"/>
</dbReference>
<dbReference type="FunFam" id="2.40.50.140:FF:000083">
    <property type="entry name" value="Holliday junction ATP-dependent DNA helicase RuvA"/>
    <property type="match status" value="1"/>
</dbReference>
<dbReference type="Gene3D" id="1.10.150.20">
    <property type="entry name" value="5' to 3' exonuclease, C-terminal subdomain"/>
    <property type="match status" value="1"/>
</dbReference>
<dbReference type="Gene3D" id="1.10.8.10">
    <property type="entry name" value="DNA helicase RuvA subunit, C-terminal domain"/>
    <property type="match status" value="1"/>
</dbReference>
<dbReference type="Gene3D" id="2.40.50.140">
    <property type="entry name" value="Nucleic acid-binding proteins"/>
    <property type="match status" value="1"/>
</dbReference>
<dbReference type="HAMAP" id="MF_00031">
    <property type="entry name" value="DNA_HJ_migration_RuvA"/>
    <property type="match status" value="1"/>
</dbReference>
<dbReference type="InterPro" id="IPR013849">
    <property type="entry name" value="DNA_helicase_Holl-junc_RuvA_I"/>
</dbReference>
<dbReference type="InterPro" id="IPR003583">
    <property type="entry name" value="Hlx-hairpin-Hlx_DNA-bd_motif"/>
</dbReference>
<dbReference type="InterPro" id="IPR012340">
    <property type="entry name" value="NA-bd_OB-fold"/>
</dbReference>
<dbReference type="InterPro" id="IPR000085">
    <property type="entry name" value="RuvA"/>
</dbReference>
<dbReference type="InterPro" id="IPR010994">
    <property type="entry name" value="RuvA_2-like"/>
</dbReference>
<dbReference type="InterPro" id="IPR011114">
    <property type="entry name" value="RuvA_C"/>
</dbReference>
<dbReference type="InterPro" id="IPR036267">
    <property type="entry name" value="RuvA_C_sf"/>
</dbReference>
<dbReference type="NCBIfam" id="TIGR00084">
    <property type="entry name" value="ruvA"/>
    <property type="match status" value="1"/>
</dbReference>
<dbReference type="Pfam" id="PF14520">
    <property type="entry name" value="HHH_5"/>
    <property type="match status" value="1"/>
</dbReference>
<dbReference type="Pfam" id="PF07499">
    <property type="entry name" value="RuvA_C"/>
    <property type="match status" value="1"/>
</dbReference>
<dbReference type="Pfam" id="PF01330">
    <property type="entry name" value="RuvA_N"/>
    <property type="match status" value="1"/>
</dbReference>
<dbReference type="SMART" id="SM00278">
    <property type="entry name" value="HhH1"/>
    <property type="match status" value="2"/>
</dbReference>
<dbReference type="SUPFAM" id="SSF46929">
    <property type="entry name" value="DNA helicase RuvA subunit, C-terminal domain"/>
    <property type="match status" value="1"/>
</dbReference>
<dbReference type="SUPFAM" id="SSF50249">
    <property type="entry name" value="Nucleic acid-binding proteins"/>
    <property type="match status" value="1"/>
</dbReference>
<dbReference type="SUPFAM" id="SSF47781">
    <property type="entry name" value="RuvA domain 2-like"/>
    <property type="match status" value="1"/>
</dbReference>
<keyword id="KW-0963">Cytoplasm</keyword>
<keyword id="KW-0227">DNA damage</keyword>
<keyword id="KW-0233">DNA recombination</keyword>
<keyword id="KW-0234">DNA repair</keyword>
<keyword id="KW-0238">DNA-binding</keyword>
<keyword id="KW-0742">SOS response</keyword>
<gene>
    <name evidence="1" type="primary">ruvA</name>
    <name type="ordered locus">ECH74115_2597</name>
</gene>
<evidence type="ECO:0000255" key="1">
    <source>
        <dbReference type="HAMAP-Rule" id="MF_00031"/>
    </source>
</evidence>
<comment type="function">
    <text evidence="1">The RuvA-RuvB-RuvC complex processes Holliday junction (HJ) DNA during genetic recombination and DNA repair, while the RuvA-RuvB complex plays an important role in the rescue of blocked DNA replication forks via replication fork reversal (RFR). RuvA specifically binds to HJ cruciform DNA, conferring on it an open structure. The RuvB hexamer acts as an ATP-dependent pump, pulling dsDNA into and through the RuvAB complex. HJ branch migration allows RuvC to scan DNA until it finds its consensus sequence, where it cleaves and resolves the cruciform DNA.</text>
</comment>
<comment type="subunit">
    <text evidence="1">Homotetramer. Forms an RuvA(8)-RuvB(12)-Holliday junction (HJ) complex. HJ DNA is sandwiched between 2 RuvA tetramers; dsDNA enters through RuvA and exits via RuvB. An RuvB hexamer assembles on each DNA strand where it exits the tetramer. Each RuvB hexamer is contacted by two RuvA subunits (via domain III) on 2 adjacent RuvB subunits; this complex drives branch migration. In the full resolvosome a probable DNA-RuvA(4)-RuvB(12)-RuvC(2) complex forms which resolves the HJ.</text>
</comment>
<comment type="subcellular location">
    <subcellularLocation>
        <location evidence="1">Cytoplasm</location>
    </subcellularLocation>
</comment>
<comment type="domain">
    <text evidence="1">Has three domains with a flexible linker between the domains II and III and assumes an 'L' shape. Domain III is highly mobile and contacts RuvB.</text>
</comment>
<comment type="similarity">
    <text evidence="1">Belongs to the RuvA family.</text>
</comment>
<name>RUVA_ECO5E</name>
<sequence length="203" mass="22086">MIGRLRGIIIEKQPPLVLIEVGGVGYEVHMPMTCFYELPEAGQEAIVFTHFVVREDAQLLYGFNNKQERTLFKELIKTNGVGPKLALAILSGMSAQQFVNAVEREEVGALVKLPGIGKKTAERLIVEMKDRFKGLHGDLFTPAADLVLTSPASPATDDAEQEAVAALVALGYKPQEASRMVSKIARPDASSETLIREALRAAL</sequence>
<feature type="chain" id="PRO_1000090313" description="Holliday junction branch migration complex subunit RuvA">
    <location>
        <begin position="1"/>
        <end position="203"/>
    </location>
</feature>
<feature type="region of interest" description="Domain I" evidence="1">
    <location>
        <begin position="1"/>
        <end position="64"/>
    </location>
</feature>
<feature type="region of interest" description="Domain II" evidence="1">
    <location>
        <begin position="65"/>
        <end position="142"/>
    </location>
</feature>
<feature type="region of interest" description="Flexible linker" evidence="1">
    <location>
        <begin position="143"/>
        <end position="154"/>
    </location>
</feature>
<feature type="region of interest" description="Domain III" evidence="1">
    <location>
        <begin position="155"/>
        <end position="203"/>
    </location>
</feature>
<organism>
    <name type="scientific">Escherichia coli O157:H7 (strain EC4115 / EHEC)</name>
    <dbReference type="NCBI Taxonomy" id="444450"/>
    <lineage>
        <taxon>Bacteria</taxon>
        <taxon>Pseudomonadati</taxon>
        <taxon>Pseudomonadota</taxon>
        <taxon>Gammaproteobacteria</taxon>
        <taxon>Enterobacterales</taxon>
        <taxon>Enterobacteriaceae</taxon>
        <taxon>Escherichia</taxon>
    </lineage>
</organism>